<name>RSMB_ECO5E</name>
<gene>
    <name evidence="1" type="primary">rsmB</name>
    <name evidence="1" type="synonym">sun</name>
    <name type="ordered locus">ECH74115_4611</name>
</gene>
<dbReference type="EC" id="2.1.1.176" evidence="1"/>
<dbReference type="EMBL" id="CP001164">
    <property type="protein sequence ID" value="ACI35065.1"/>
    <property type="molecule type" value="Genomic_DNA"/>
</dbReference>
<dbReference type="RefSeq" id="WP_001301795.1">
    <property type="nucleotide sequence ID" value="NC_011353.1"/>
</dbReference>
<dbReference type="SMR" id="B5YT08"/>
<dbReference type="KEGG" id="ecf:ECH74115_4611"/>
<dbReference type="HOGENOM" id="CLU_005316_0_4_6"/>
<dbReference type="GO" id="GO:0005829">
    <property type="term" value="C:cytosol"/>
    <property type="evidence" value="ECO:0007669"/>
    <property type="project" value="TreeGrafter"/>
</dbReference>
<dbReference type="GO" id="GO:0003723">
    <property type="term" value="F:RNA binding"/>
    <property type="evidence" value="ECO:0007669"/>
    <property type="project" value="UniProtKB-KW"/>
</dbReference>
<dbReference type="GO" id="GO:0009383">
    <property type="term" value="F:rRNA (cytosine-C5-)-methyltransferase activity"/>
    <property type="evidence" value="ECO:0007669"/>
    <property type="project" value="TreeGrafter"/>
</dbReference>
<dbReference type="GO" id="GO:0006355">
    <property type="term" value="P:regulation of DNA-templated transcription"/>
    <property type="evidence" value="ECO:0007669"/>
    <property type="project" value="InterPro"/>
</dbReference>
<dbReference type="GO" id="GO:0070475">
    <property type="term" value="P:rRNA base methylation"/>
    <property type="evidence" value="ECO:0007669"/>
    <property type="project" value="TreeGrafter"/>
</dbReference>
<dbReference type="CDD" id="cd02440">
    <property type="entry name" value="AdoMet_MTases"/>
    <property type="match status" value="1"/>
</dbReference>
<dbReference type="CDD" id="cd00620">
    <property type="entry name" value="Methyltransferase_Sun"/>
    <property type="match status" value="1"/>
</dbReference>
<dbReference type="FunFam" id="1.10.287.730:FF:000001">
    <property type="entry name" value="Ribosomal RNA small subunit methyltransferase B"/>
    <property type="match status" value="1"/>
</dbReference>
<dbReference type="FunFam" id="1.10.940.10:FF:000002">
    <property type="entry name" value="Ribosomal RNA small subunit methyltransferase B"/>
    <property type="match status" value="1"/>
</dbReference>
<dbReference type="FunFam" id="3.30.70.1170:FF:000002">
    <property type="entry name" value="Ribosomal RNA small subunit methyltransferase B"/>
    <property type="match status" value="1"/>
</dbReference>
<dbReference type="FunFam" id="3.40.50.150:FF:000022">
    <property type="entry name" value="Ribosomal RNA small subunit methyltransferase B"/>
    <property type="match status" value="1"/>
</dbReference>
<dbReference type="Gene3D" id="1.10.287.730">
    <property type="entry name" value="Helix hairpin bin"/>
    <property type="match status" value="1"/>
</dbReference>
<dbReference type="Gene3D" id="1.10.940.10">
    <property type="entry name" value="NusB-like"/>
    <property type="match status" value="1"/>
</dbReference>
<dbReference type="Gene3D" id="3.30.70.1170">
    <property type="entry name" value="Sun protein, domain 3"/>
    <property type="match status" value="1"/>
</dbReference>
<dbReference type="Gene3D" id="3.40.50.150">
    <property type="entry name" value="Vaccinia Virus protein VP39"/>
    <property type="match status" value="1"/>
</dbReference>
<dbReference type="HAMAP" id="MF_01856">
    <property type="entry name" value="16SrRNA_methyltr_B"/>
    <property type="match status" value="1"/>
</dbReference>
<dbReference type="InterPro" id="IPR049560">
    <property type="entry name" value="MeTrfase_RsmB-F_NOP2_cat"/>
</dbReference>
<dbReference type="InterPro" id="IPR001678">
    <property type="entry name" value="MeTrfase_RsmB-F_NOP2_dom"/>
</dbReference>
<dbReference type="InterPro" id="IPR035926">
    <property type="entry name" value="NusB-like_sf"/>
</dbReference>
<dbReference type="InterPro" id="IPR006027">
    <property type="entry name" value="NusB_RsmB_TIM44"/>
</dbReference>
<dbReference type="InterPro" id="IPR023267">
    <property type="entry name" value="RCMT"/>
</dbReference>
<dbReference type="InterPro" id="IPR004573">
    <property type="entry name" value="rRNA_ssu_MeTfrase_B"/>
</dbReference>
<dbReference type="InterPro" id="IPR023541">
    <property type="entry name" value="rRNA_ssu_MeTfrase_B_ent"/>
</dbReference>
<dbReference type="InterPro" id="IPR054728">
    <property type="entry name" value="RsmB-like_ferredoxin"/>
</dbReference>
<dbReference type="InterPro" id="IPR048019">
    <property type="entry name" value="RsmB-like_N"/>
</dbReference>
<dbReference type="InterPro" id="IPR018314">
    <property type="entry name" value="RsmB/NOL1/NOP2-like_CS"/>
</dbReference>
<dbReference type="InterPro" id="IPR029063">
    <property type="entry name" value="SAM-dependent_MTases_sf"/>
</dbReference>
<dbReference type="NCBIfam" id="NF008149">
    <property type="entry name" value="PRK10901.1"/>
    <property type="match status" value="1"/>
</dbReference>
<dbReference type="NCBIfam" id="NF011494">
    <property type="entry name" value="PRK14902.1"/>
    <property type="match status" value="1"/>
</dbReference>
<dbReference type="NCBIfam" id="TIGR00563">
    <property type="entry name" value="rsmB"/>
    <property type="match status" value="1"/>
</dbReference>
<dbReference type="PANTHER" id="PTHR22807:SF61">
    <property type="entry name" value="NOL1_NOP2_SUN FAMILY PROTEIN _ ANTITERMINATION NUSB DOMAIN-CONTAINING PROTEIN"/>
    <property type="match status" value="1"/>
</dbReference>
<dbReference type="PANTHER" id="PTHR22807">
    <property type="entry name" value="NOP2 YEAST -RELATED NOL1/NOP2/FMU SUN DOMAIN-CONTAINING"/>
    <property type="match status" value="1"/>
</dbReference>
<dbReference type="Pfam" id="PF01189">
    <property type="entry name" value="Methyltr_RsmB-F"/>
    <property type="match status" value="1"/>
</dbReference>
<dbReference type="Pfam" id="PF01029">
    <property type="entry name" value="NusB"/>
    <property type="match status" value="1"/>
</dbReference>
<dbReference type="Pfam" id="PF22458">
    <property type="entry name" value="RsmF-B_ferredox"/>
    <property type="match status" value="1"/>
</dbReference>
<dbReference type="PRINTS" id="PR02008">
    <property type="entry name" value="RCMTFAMILY"/>
</dbReference>
<dbReference type="SUPFAM" id="SSF48013">
    <property type="entry name" value="NusB-like"/>
    <property type="match status" value="1"/>
</dbReference>
<dbReference type="SUPFAM" id="SSF53335">
    <property type="entry name" value="S-adenosyl-L-methionine-dependent methyltransferases"/>
    <property type="match status" value="1"/>
</dbReference>
<dbReference type="PROSITE" id="PS01153">
    <property type="entry name" value="NOL1_NOP2_SUN"/>
    <property type="match status" value="1"/>
</dbReference>
<dbReference type="PROSITE" id="PS51686">
    <property type="entry name" value="SAM_MT_RSMB_NOP"/>
    <property type="match status" value="1"/>
</dbReference>
<protein>
    <recommendedName>
        <fullName evidence="1">Ribosomal RNA small subunit methyltransferase B</fullName>
        <ecNumber evidence="1">2.1.1.176</ecNumber>
    </recommendedName>
    <alternativeName>
        <fullName evidence="1">16S rRNA m5C967 methyltransferase</fullName>
    </alternativeName>
    <alternativeName>
        <fullName evidence="1">rRNA (cytosine-C(5)-)-methyltransferase RsmB</fullName>
    </alternativeName>
</protein>
<evidence type="ECO:0000255" key="1">
    <source>
        <dbReference type="HAMAP-Rule" id="MF_01856"/>
    </source>
</evidence>
<feature type="chain" id="PRO_0000366156" description="Ribosomal RNA small subunit methyltransferase B">
    <location>
        <begin position="1"/>
        <end position="429"/>
    </location>
</feature>
<feature type="active site" description="Nucleophile" evidence="1">
    <location>
        <position position="375"/>
    </location>
</feature>
<feature type="binding site" evidence="1">
    <location>
        <begin position="254"/>
        <end position="260"/>
    </location>
    <ligand>
        <name>S-adenosyl-L-methionine</name>
        <dbReference type="ChEBI" id="CHEBI:59789"/>
    </ligand>
</feature>
<feature type="binding site" evidence="1">
    <location>
        <position position="277"/>
    </location>
    <ligand>
        <name>S-adenosyl-L-methionine</name>
        <dbReference type="ChEBI" id="CHEBI:59789"/>
    </ligand>
</feature>
<feature type="binding site" evidence="1">
    <location>
        <position position="303"/>
    </location>
    <ligand>
        <name>S-adenosyl-L-methionine</name>
        <dbReference type="ChEBI" id="CHEBI:59789"/>
    </ligand>
</feature>
<feature type="binding site" evidence="1">
    <location>
        <position position="322"/>
    </location>
    <ligand>
        <name>S-adenosyl-L-methionine</name>
        <dbReference type="ChEBI" id="CHEBI:59789"/>
    </ligand>
</feature>
<organism>
    <name type="scientific">Escherichia coli O157:H7 (strain EC4115 / EHEC)</name>
    <dbReference type="NCBI Taxonomy" id="444450"/>
    <lineage>
        <taxon>Bacteria</taxon>
        <taxon>Pseudomonadati</taxon>
        <taxon>Pseudomonadota</taxon>
        <taxon>Gammaproteobacteria</taxon>
        <taxon>Enterobacterales</taxon>
        <taxon>Enterobacteriaceae</taxon>
        <taxon>Escherichia</taxon>
    </lineage>
</organism>
<reference key="1">
    <citation type="journal article" date="2011" name="Proc. Natl. Acad. Sci. U.S.A.">
        <title>Genomic anatomy of Escherichia coli O157:H7 outbreaks.</title>
        <authorList>
            <person name="Eppinger M."/>
            <person name="Mammel M.K."/>
            <person name="Leclerc J.E."/>
            <person name="Ravel J."/>
            <person name="Cebula T.A."/>
        </authorList>
    </citation>
    <scope>NUCLEOTIDE SEQUENCE [LARGE SCALE GENOMIC DNA]</scope>
    <source>
        <strain>EC4115 / EHEC</strain>
    </source>
</reference>
<comment type="function">
    <text evidence="1">Specifically methylates the cytosine at position 967 (m5C967) of 16S rRNA.</text>
</comment>
<comment type="catalytic activity">
    <reaction evidence="1">
        <text>cytidine(967) in 16S rRNA + S-adenosyl-L-methionine = 5-methylcytidine(967) in 16S rRNA + S-adenosyl-L-homocysteine + H(+)</text>
        <dbReference type="Rhea" id="RHEA:42748"/>
        <dbReference type="Rhea" id="RHEA-COMP:10219"/>
        <dbReference type="Rhea" id="RHEA-COMP:10220"/>
        <dbReference type="ChEBI" id="CHEBI:15378"/>
        <dbReference type="ChEBI" id="CHEBI:57856"/>
        <dbReference type="ChEBI" id="CHEBI:59789"/>
        <dbReference type="ChEBI" id="CHEBI:74483"/>
        <dbReference type="ChEBI" id="CHEBI:82748"/>
        <dbReference type="EC" id="2.1.1.176"/>
    </reaction>
</comment>
<comment type="subcellular location">
    <subcellularLocation>
        <location evidence="1">Cytoplasm</location>
    </subcellularLocation>
</comment>
<comment type="similarity">
    <text evidence="1">Belongs to the class I-like SAM-binding methyltransferase superfamily. RsmB/NOP family.</text>
</comment>
<proteinExistence type="inferred from homology"/>
<accession>B5YT08</accession>
<keyword id="KW-0963">Cytoplasm</keyword>
<keyword id="KW-0489">Methyltransferase</keyword>
<keyword id="KW-0694">RNA-binding</keyword>
<keyword id="KW-0698">rRNA processing</keyword>
<keyword id="KW-0949">S-adenosyl-L-methionine</keyword>
<keyword id="KW-0808">Transferase</keyword>
<sequence length="429" mass="48351">MKKQRNLRSMAAQAVEQVVEQGQSLSNILPPLQQKVSDKDKALLQELCFGVLRTLSQLDWLINKSMARPMTGKQRTVHYLIMVGLYQLLYTRIPPHAALAETVEGAIAIKRPQLKGLINGVLRQFQRQQEELLAEFNTSDARYLHPSWLLKRLQKAYPEQWQSIVEANNQRPPMWLRINRTHHSRDTWLALLDEAGMKGFPHADYPDAVRLETPAPVHALPGFEDGWVTVQDASAQGCMTWLAPQNGEHILDLCAAPGGKTTHILEVAPEAQVVAVDIDEQRLSRVYDNLKRLGMKATVKQGDGRYPSQWCGEQQFDRILLDAPCSATGVIRRHPDIKWLRRDRDIPELAQLQSEILDAIWPHLKSGGTLVYATCSVLPEENSLQIKAFLQRTADAELCETGTPEQPGKQNLPGAEEGDGFFYAKLIKK</sequence>